<accession>Q7VCI6</accession>
<name>RUVA_PROMA</name>
<organism>
    <name type="scientific">Prochlorococcus marinus (strain SARG / CCMP1375 / SS120)</name>
    <dbReference type="NCBI Taxonomy" id="167539"/>
    <lineage>
        <taxon>Bacteria</taxon>
        <taxon>Bacillati</taxon>
        <taxon>Cyanobacteriota</taxon>
        <taxon>Cyanophyceae</taxon>
        <taxon>Synechococcales</taxon>
        <taxon>Prochlorococcaceae</taxon>
        <taxon>Prochlorococcus</taxon>
    </lineage>
</organism>
<keyword id="KW-0963">Cytoplasm</keyword>
<keyword id="KW-0227">DNA damage</keyword>
<keyword id="KW-0233">DNA recombination</keyword>
<keyword id="KW-0234">DNA repair</keyword>
<keyword id="KW-0238">DNA-binding</keyword>
<keyword id="KW-1185">Reference proteome</keyword>
<evidence type="ECO:0000255" key="1">
    <source>
        <dbReference type="HAMAP-Rule" id="MF_00031"/>
    </source>
</evidence>
<gene>
    <name evidence="1" type="primary">ruvA</name>
    <name type="ordered locus">Pro_0754</name>
</gene>
<reference key="1">
    <citation type="journal article" date="2003" name="Proc. Natl. Acad. Sci. U.S.A.">
        <title>Genome sequence of the cyanobacterium Prochlorococcus marinus SS120, a nearly minimal oxyphototrophic genome.</title>
        <authorList>
            <person name="Dufresne A."/>
            <person name="Salanoubat M."/>
            <person name="Partensky F."/>
            <person name="Artiguenave F."/>
            <person name="Axmann I.M."/>
            <person name="Barbe V."/>
            <person name="Duprat S."/>
            <person name="Galperin M.Y."/>
            <person name="Koonin E.V."/>
            <person name="Le Gall F."/>
            <person name="Makarova K.S."/>
            <person name="Ostrowski M."/>
            <person name="Oztas S."/>
            <person name="Robert C."/>
            <person name="Rogozin I.B."/>
            <person name="Scanlan D.J."/>
            <person name="Tandeau de Marsac N."/>
            <person name="Weissenbach J."/>
            <person name="Wincker P."/>
            <person name="Wolf Y.I."/>
            <person name="Hess W.R."/>
        </authorList>
    </citation>
    <scope>NUCLEOTIDE SEQUENCE [LARGE SCALE GENOMIC DNA]</scope>
    <source>
        <strain>SARG / CCMP1375 / SS120</strain>
    </source>
</reference>
<comment type="function">
    <text evidence="1">The RuvA-RuvB-RuvC complex processes Holliday junction (HJ) DNA during genetic recombination and DNA repair, while the RuvA-RuvB complex plays an important role in the rescue of blocked DNA replication forks via replication fork reversal (RFR). RuvA specifically binds to HJ cruciform DNA, conferring on it an open structure. The RuvB hexamer acts as an ATP-dependent pump, pulling dsDNA into and through the RuvAB complex. HJ branch migration allows RuvC to scan DNA until it finds its consensus sequence, where it cleaves and resolves the cruciform DNA.</text>
</comment>
<comment type="subunit">
    <text evidence="1">Homotetramer. Forms an RuvA(8)-RuvB(12)-Holliday junction (HJ) complex. HJ DNA is sandwiched between 2 RuvA tetramers; dsDNA enters through RuvA and exits via RuvB. An RuvB hexamer assembles on each DNA strand where it exits the tetramer. Each RuvB hexamer is contacted by two RuvA subunits (via domain III) on 2 adjacent RuvB subunits; this complex drives branch migration. In the full resolvosome a probable DNA-RuvA(4)-RuvB(12)-RuvC(2) complex forms which resolves the HJ.</text>
</comment>
<comment type="subcellular location">
    <subcellularLocation>
        <location evidence="1">Cytoplasm</location>
    </subcellularLocation>
</comment>
<comment type="domain">
    <text evidence="1">Has three domains with a flexible linker between the domains II and III and assumes an 'L' shape. Domain III is highly mobile and contacts RuvB.</text>
</comment>
<comment type="similarity">
    <text evidence="1">Belongs to the RuvA family.</text>
</comment>
<dbReference type="EMBL" id="AE017126">
    <property type="protein sequence ID" value="AAP99798.1"/>
    <property type="molecule type" value="Genomic_DNA"/>
</dbReference>
<dbReference type="RefSeq" id="NP_875146.1">
    <property type="nucleotide sequence ID" value="NC_005042.1"/>
</dbReference>
<dbReference type="RefSeq" id="WP_011124906.1">
    <property type="nucleotide sequence ID" value="NC_005042.1"/>
</dbReference>
<dbReference type="SMR" id="Q7VCI6"/>
<dbReference type="STRING" id="167539.Pro_0754"/>
<dbReference type="EnsemblBacteria" id="AAP99798">
    <property type="protein sequence ID" value="AAP99798"/>
    <property type="gene ID" value="Pro_0754"/>
</dbReference>
<dbReference type="KEGG" id="pma:Pro_0754"/>
<dbReference type="PATRIC" id="fig|167539.5.peg.798"/>
<dbReference type="eggNOG" id="COG0632">
    <property type="taxonomic scope" value="Bacteria"/>
</dbReference>
<dbReference type="HOGENOM" id="CLU_087936_0_0_3"/>
<dbReference type="OrthoDB" id="5293449at2"/>
<dbReference type="Proteomes" id="UP000001420">
    <property type="component" value="Chromosome"/>
</dbReference>
<dbReference type="GO" id="GO:0005737">
    <property type="term" value="C:cytoplasm"/>
    <property type="evidence" value="ECO:0007669"/>
    <property type="project" value="UniProtKB-SubCell"/>
</dbReference>
<dbReference type="GO" id="GO:0048476">
    <property type="term" value="C:Holliday junction resolvase complex"/>
    <property type="evidence" value="ECO:0007669"/>
    <property type="project" value="UniProtKB-UniRule"/>
</dbReference>
<dbReference type="GO" id="GO:0005524">
    <property type="term" value="F:ATP binding"/>
    <property type="evidence" value="ECO:0007669"/>
    <property type="project" value="InterPro"/>
</dbReference>
<dbReference type="GO" id="GO:0000400">
    <property type="term" value="F:four-way junction DNA binding"/>
    <property type="evidence" value="ECO:0007669"/>
    <property type="project" value="UniProtKB-UniRule"/>
</dbReference>
<dbReference type="GO" id="GO:0009378">
    <property type="term" value="F:four-way junction helicase activity"/>
    <property type="evidence" value="ECO:0007669"/>
    <property type="project" value="InterPro"/>
</dbReference>
<dbReference type="GO" id="GO:0006310">
    <property type="term" value="P:DNA recombination"/>
    <property type="evidence" value="ECO:0007669"/>
    <property type="project" value="UniProtKB-UniRule"/>
</dbReference>
<dbReference type="GO" id="GO:0006281">
    <property type="term" value="P:DNA repair"/>
    <property type="evidence" value="ECO:0007669"/>
    <property type="project" value="UniProtKB-UniRule"/>
</dbReference>
<dbReference type="Gene3D" id="1.10.150.20">
    <property type="entry name" value="5' to 3' exonuclease, C-terminal subdomain"/>
    <property type="match status" value="1"/>
</dbReference>
<dbReference type="Gene3D" id="2.40.50.140">
    <property type="entry name" value="Nucleic acid-binding proteins"/>
    <property type="match status" value="1"/>
</dbReference>
<dbReference type="HAMAP" id="MF_00031">
    <property type="entry name" value="DNA_HJ_migration_RuvA"/>
    <property type="match status" value="1"/>
</dbReference>
<dbReference type="InterPro" id="IPR013849">
    <property type="entry name" value="DNA_helicase_Holl-junc_RuvA_I"/>
</dbReference>
<dbReference type="InterPro" id="IPR003583">
    <property type="entry name" value="Hlx-hairpin-Hlx_DNA-bd_motif"/>
</dbReference>
<dbReference type="InterPro" id="IPR012340">
    <property type="entry name" value="NA-bd_OB-fold"/>
</dbReference>
<dbReference type="InterPro" id="IPR000085">
    <property type="entry name" value="RuvA"/>
</dbReference>
<dbReference type="InterPro" id="IPR010994">
    <property type="entry name" value="RuvA_2-like"/>
</dbReference>
<dbReference type="NCBIfam" id="TIGR00084">
    <property type="entry name" value="ruvA"/>
    <property type="match status" value="1"/>
</dbReference>
<dbReference type="Pfam" id="PF14520">
    <property type="entry name" value="HHH_5"/>
    <property type="match status" value="1"/>
</dbReference>
<dbReference type="Pfam" id="PF01330">
    <property type="entry name" value="RuvA_N"/>
    <property type="match status" value="1"/>
</dbReference>
<dbReference type="SMART" id="SM00278">
    <property type="entry name" value="HhH1"/>
    <property type="match status" value="2"/>
</dbReference>
<dbReference type="SUPFAM" id="SSF50249">
    <property type="entry name" value="Nucleic acid-binding proteins"/>
    <property type="match status" value="1"/>
</dbReference>
<dbReference type="SUPFAM" id="SSF47781">
    <property type="entry name" value="RuvA domain 2-like"/>
    <property type="match status" value="1"/>
</dbReference>
<proteinExistence type="inferred from homology"/>
<protein>
    <recommendedName>
        <fullName evidence="1">Holliday junction branch migration complex subunit RuvA</fullName>
    </recommendedName>
</protein>
<sequence length="222" mass="24887">MISWLNGLKIEIWENGTRKGVLISCSGVGYEVQLLSRSLQLLNTSKELILWVHEVHREDGSQLIGFLNKLERDLFRKLISVSGVGPQLAISLLEKNPAEQLISAITKKKIAQLTSCPGVGKKTAERLVIELQNKLSDLIGSSLKKTNNHLELEYETNVADEVRSTLLNLDYKNSEIEKAFLEFETSSKSIRSKAQESFEVSKGLDFETLLKETLIRINTESG</sequence>
<feature type="chain" id="PRO_0000094662" description="Holliday junction branch migration complex subunit RuvA">
    <location>
        <begin position="1"/>
        <end position="222"/>
    </location>
</feature>
<feature type="region of interest" description="Domain I" evidence="1">
    <location>
        <begin position="1"/>
        <end position="67"/>
    </location>
</feature>
<feature type="region of interest" description="Domain II" evidence="1">
    <location>
        <begin position="68"/>
        <end position="146"/>
    </location>
</feature>
<feature type="region of interest" description="Flexible linker" evidence="1">
    <location>
        <begin position="147"/>
        <end position="155"/>
    </location>
</feature>
<feature type="region of interest" description="Domain III" evidence="1">
    <location>
        <begin position="155"/>
        <end position="222"/>
    </location>
</feature>